<sequence length="233" mass="27897">MTYPRRRYRRRRHRPRSHLGQILRRRPWLVHPRHRYRWRRKNGIFNTRLSRTFGYTVKATTVRTPSWAVDMMRFNIDDFVPPGGGTNKISIPFEYYRIRKVKVEFWPCSPITQGDRGVGSTAVILDDNFVTKATALTYDPYVNYSSRHTIPQPFSYHSRYFTPKPVLDSTIDYFQPNNKRTQLWLRLQTSRNVDHVGLGTAFENSIYDQDYNIRVTMYVQFREFNLKDPPLKP</sequence>
<proteinExistence type="evidence at protein level"/>
<protein>
    <recommendedName>
        <fullName>Capsid protein</fullName>
    </recommendedName>
</protein>
<organism>
    <name type="scientific">Porcine circovirus 2</name>
    <name type="common">PCV2</name>
    <dbReference type="NCBI Taxonomy" id="85708"/>
    <lineage>
        <taxon>Viruses</taxon>
        <taxon>Monodnaviria</taxon>
        <taxon>Shotokuvirae</taxon>
        <taxon>Cressdnaviricota</taxon>
        <taxon>Arfiviricetes</taxon>
        <taxon>Cirlivirales</taxon>
        <taxon>Circoviridae</taxon>
        <taxon>Circovirus</taxon>
        <taxon>Circovirus porcine2</taxon>
    </lineage>
</organism>
<name>CAPSD_PCV2</name>
<organismHost>
    <name type="scientific">Sus scrofa</name>
    <name type="common">Pig</name>
    <dbReference type="NCBI Taxonomy" id="9823"/>
</organismHost>
<keyword id="KW-0167">Capsid protein</keyword>
<keyword id="KW-1167">Clathrin- and caveolin-independent endocytosis of virus by host</keyword>
<keyword id="KW-0238">DNA-binding</keyword>
<keyword id="KW-1048">Host nucleus</keyword>
<keyword id="KW-0945">Host-virus interaction</keyword>
<keyword id="KW-1185">Reference proteome</keyword>
<keyword id="KW-1140">T=1 icosahedral capsid protein</keyword>
<keyword id="KW-1161">Viral attachment to host cell</keyword>
<keyword id="KW-1162">Viral penetration into host cytoplasm</keyword>
<keyword id="KW-1163">Viral penetration into host nucleus</keyword>
<keyword id="KW-0946">Virion</keyword>
<keyword id="KW-1164">Virus endocytosis by host</keyword>
<keyword id="KW-1160">Virus entry into host cell</keyword>
<evidence type="ECO:0000250" key="1"/>
<evidence type="ECO:0000269" key="2">
    <source>
    </source>
</evidence>
<evidence type="ECO:0000269" key="3">
    <source>
    </source>
</evidence>
<evidence type="ECO:0000269" key="4">
    <source>
    </source>
</evidence>
<evidence type="ECO:0000269" key="5">
    <source>
    </source>
</evidence>
<evidence type="ECO:0000269" key="6">
    <source>
    </source>
</evidence>
<evidence type="ECO:0000269" key="7">
    <source>
    </source>
</evidence>
<evidence type="ECO:0000305" key="8"/>
<reference key="1">
    <citation type="journal article" date="1998" name="J. Virol.">
        <title>Nucleotide sequence of porcine circovirus associated with postweaning multisystemic wasting syndrome in pigs.</title>
        <authorList>
            <person name="Hamel A.L."/>
            <person name="Lin L.L."/>
            <person name="Nayar G.P."/>
        </authorList>
    </citation>
    <scope>NUCLEOTIDE SEQUENCE [GENOMIC DNA]</scope>
    <source>
        <strain>pmws</strain>
    </source>
</reference>
<reference key="2">
    <citation type="journal article" date="2003" name="Virology">
        <title>Transcriptional analysis of porcine circovirus type 2.</title>
        <authorList>
            <person name="Cheung A.K."/>
        </authorList>
    </citation>
    <scope>NUCLEOTIDE SEQUENCE [GENOMIC DNA]</scope>
    <source>
        <strain>Isolate PCV/688</strain>
    </source>
</reference>
<reference key="3">
    <citation type="journal article" date="2000" name="J. Gen. Virol.">
        <title>Open reading frame 2 of porcine circovirus type 2 encodes a major capsid protein.</title>
        <authorList>
            <person name="Nawagitgul P."/>
            <person name="Morozov I."/>
            <person name="Bolin S.R."/>
            <person name="Harms P.A."/>
            <person name="Sorden S.D."/>
            <person name="Paul P.S."/>
        </authorList>
    </citation>
    <scope>FUNCTION</scope>
    <scope>SUBUNIT</scope>
</reference>
<reference key="4">
    <citation type="journal article" date="2001" name="Virology">
        <title>Nuclear localization of the ORF2 protein encoded by porcine circovirus type 2.</title>
        <authorList>
            <person name="Liu Q."/>
            <person name="Tikoo S.K."/>
            <person name="Babiuk L.A."/>
        </authorList>
    </citation>
    <scope>SUBCELLULAR LOCATION</scope>
    <scope>NUCLEAR LOCALIZATION SIGNALS</scope>
</reference>
<reference key="5">
    <citation type="journal article" date="2004" name="J. Virol.">
        <title>Two amino acid mutations in the capsid protein of type 2 porcine circovirus (PCV2) enhanced PCV2 replication in vitro and attenuated the virus in vivo.</title>
        <authorList>
            <person name="Fenaux M."/>
            <person name="Opriessnig T."/>
            <person name="Halbur P.G."/>
            <person name="Elvinger F."/>
            <person name="Meng X.J."/>
        </authorList>
    </citation>
    <scope>MUTAGENESIS OF PRO-110 AND ARG-191</scope>
</reference>
<reference key="6">
    <citation type="journal article" date="2006" name="J. Virol.">
        <title>Porcine circovirus 2 uses heparan sulfate and chondroitin sulfate B glycosaminoglycans as receptors for its attachment to host cells.</title>
        <authorList>
            <person name="Misinzo G."/>
            <person name="Delputte P.L."/>
            <person name="Meerts P."/>
            <person name="Lefebvre D.J."/>
            <person name="Nauwynck H.J."/>
        </authorList>
    </citation>
    <scope>FUNCTION</scope>
</reference>
<reference key="7">
    <citation type="journal article" date="2009" name="Virus Res.">
        <title>Porcine circovirus 2 infection of epithelial cells is clathrin-, caveolae- and dynamin-independent, actin and Rho-GTPase-mediated, and enhanced by cholesterol depletion.</title>
        <authorList>
            <person name="Misinzo G."/>
            <person name="Delputte P.L."/>
            <person name="Lefebvre D.J."/>
            <person name="Nauwynck H.J."/>
        </authorList>
    </citation>
    <scope>FUNCTION</scope>
</reference>
<reference key="8">
    <citation type="journal article" date="2018" name="Virus Res.">
        <title>Nuclear localization signal regulates porcine circovirus type 2 capsid protein nuclear export through phosphorylation.</title>
        <authorList>
            <person name="Hou Q."/>
            <person name="Hou S."/>
            <person name="Chen Q."/>
            <person name="Jia H."/>
            <person name="Xin T."/>
            <person name="Jiang Y."/>
            <person name="Guo X."/>
            <person name="Zhu H."/>
        </authorList>
    </citation>
    <scope>SUBCELLULAR LOCATION</scope>
</reference>
<accession>O56129</accession>
<accession>Q8BB11</accession>
<feature type="chain" id="PRO_0000133085" description="Capsid protein">
    <location>
        <begin position="1"/>
        <end position="233"/>
    </location>
</feature>
<feature type="region of interest" description="DNA-binding" evidence="1">
    <location>
        <begin position="1"/>
        <end position="47"/>
    </location>
</feature>
<feature type="region of interest" description="Nuclear localization signals" evidence="7">
    <location>
        <begin position="5"/>
        <end position="41"/>
    </location>
</feature>
<feature type="sequence variant" description="In strain: Isolate PCV/688.">
    <original>A</original>
    <variation>R</variation>
    <location>
        <position position="59"/>
    </location>
</feature>
<feature type="sequence variant" description="In strain: Isolate PCV/688.">
    <original>R</original>
    <variation>T</variation>
    <location>
        <position position="63"/>
    </location>
</feature>
<feature type="sequence variant" description="In strain: Isolate PCV/688.">
    <original>NI</original>
    <variation>KF</variation>
    <location>
        <begin position="75"/>
        <end position="76"/>
    </location>
</feature>
<feature type="sequence variant" description="In strain: Isolate PCV/688.">
    <original>T</original>
    <variation>P</variation>
    <location>
        <position position="131"/>
    </location>
</feature>
<feature type="sequence variant" description="In strain: Isolate PCV/688.">
    <original>T</original>
    <variation>N</variation>
    <location>
        <position position="134"/>
    </location>
</feature>
<feature type="sequence variant" description="In strain: Isolate PCV/688.">
    <original>T</original>
    <variation>N</variation>
    <location>
        <position position="181"/>
    </location>
</feature>
<feature type="sequence variant" description="In strain: Isolate PCV/688.">
    <original>I</original>
    <variation>K</variation>
    <location>
        <position position="206"/>
    </location>
</feature>
<feature type="sequence variant" description="In strain: Isolate PCV/688.">
    <original>V</original>
    <variation>I</variation>
    <location>
        <position position="215"/>
    </location>
</feature>
<feature type="sequence variant" description="In strain: Isolate PCV/688.">
    <original>K</original>
    <variation>N</variation>
    <location>
        <position position="232"/>
    </location>
</feature>
<feature type="mutagenesis site" description="Complete loss of virulence in host and increased replication in PK15 cell culture; when associated with S-191." evidence="4">
    <original>P</original>
    <variation>A</variation>
    <location>
        <position position="110"/>
    </location>
</feature>
<feature type="mutagenesis site" description="Complete loss of virulence in host and increased replication in PK15 cell culture; when associated with A-110." evidence="4">
    <original>R</original>
    <variation>S</variation>
    <location>
        <position position="191"/>
    </location>
</feature>
<comment type="function">
    <text evidence="1 2 5 6">Self-assembles to form the virion icosahedral capsid with a T=1 symmetry. This very small capsid (17 - 22 nm in diameter) allows the virus to be very stable in the environment and resistant to some disinfectants, including detergents. Essential for the initial attachment to heparan sulfate moieties and chondroitin sulfate B of the host cell surface proteoglycans. After attachment, the virus is internalized in a clathrin-, caveolae- and dynamin-independent, actin and Rho-GTPase-mediated pathway and traffics to the nucleus. The capsid protein binds and transports the viral genome and Rep across the nuclear envelope (By similarity).</text>
</comment>
<comment type="subunit">
    <text evidence="1 8">Homomultimer. Assembles in the nucleus, presumably in an immature form, then migrates to the cytoplasm once assembled as mature virion (Probable). Interacts with Rep; this interaction relocates Rep into the nucleus (By similarity).</text>
</comment>
<comment type="subcellular location">
    <subcellularLocation>
        <location evidence="3 7">Host nucleus</location>
    </subcellularLocation>
    <subcellularLocation>
        <location evidence="8">Virion</location>
    </subcellularLocation>
</comment>
<comment type="similarity">
    <text evidence="8">Belongs to the circoviridae capsid protein family.</text>
</comment>
<dbReference type="EMBL" id="AF027217">
    <property type="protein sequence ID" value="AAC59463.1"/>
    <property type="molecule type" value="Genomic_DNA"/>
</dbReference>
<dbReference type="EMBL" id="AY094619">
    <property type="protein sequence ID" value="AAM21849.1"/>
    <property type="molecule type" value="Genomic_DNA"/>
</dbReference>
<dbReference type="SMR" id="O56129"/>
<dbReference type="DIP" id="DIP-61914N"/>
<dbReference type="ABCD" id="O56129">
    <property type="antibodies" value="21 sequenced antibodies"/>
</dbReference>
<dbReference type="Proteomes" id="UP000000470">
    <property type="component" value="Genome"/>
</dbReference>
<dbReference type="Proteomes" id="UP000150239">
    <property type="component" value="Genome"/>
</dbReference>
<dbReference type="GO" id="GO:0043657">
    <property type="term" value="C:host cell"/>
    <property type="evidence" value="ECO:0007669"/>
    <property type="project" value="GOC"/>
</dbReference>
<dbReference type="GO" id="GO:0030430">
    <property type="term" value="C:host cell cytoplasm"/>
    <property type="evidence" value="ECO:0000314"/>
    <property type="project" value="AgBase"/>
</dbReference>
<dbReference type="GO" id="GO:0044174">
    <property type="term" value="C:host cell endosome"/>
    <property type="evidence" value="ECO:0000314"/>
    <property type="project" value="AgBase"/>
</dbReference>
<dbReference type="GO" id="GO:0042025">
    <property type="term" value="C:host cell nucleus"/>
    <property type="evidence" value="ECO:0000314"/>
    <property type="project" value="AgBase"/>
</dbReference>
<dbReference type="GO" id="GO:0039615">
    <property type="term" value="C:T=1 icosahedral viral capsid"/>
    <property type="evidence" value="ECO:0007669"/>
    <property type="project" value="UniProtKB-KW"/>
</dbReference>
<dbReference type="GO" id="GO:0003677">
    <property type="term" value="F:DNA binding"/>
    <property type="evidence" value="ECO:0007669"/>
    <property type="project" value="UniProtKB-KW"/>
</dbReference>
<dbReference type="GO" id="GO:0019065">
    <property type="term" value="P:receptor-mediated endocytosis of virus by host cell"/>
    <property type="evidence" value="ECO:0007669"/>
    <property type="project" value="UniProtKB-KW"/>
</dbReference>
<dbReference type="GO" id="GO:0141028">
    <property type="term" value="P:symbiont-mediated perturbation of host microtubule cytoskeleton"/>
    <property type="evidence" value="ECO:0000315"/>
    <property type="project" value="AgBase"/>
</dbReference>
<dbReference type="GO" id="GO:0019069">
    <property type="term" value="P:viral capsid assembly"/>
    <property type="evidence" value="ECO:0007669"/>
    <property type="project" value="InterPro"/>
</dbReference>
<dbReference type="GO" id="GO:0075732">
    <property type="term" value="P:viral penetration into host nucleus"/>
    <property type="evidence" value="ECO:0007669"/>
    <property type="project" value="UniProtKB-KW"/>
</dbReference>
<dbReference type="GO" id="GO:0019062">
    <property type="term" value="P:virion attachment to host cell"/>
    <property type="evidence" value="ECO:0007669"/>
    <property type="project" value="UniProtKB-KW"/>
</dbReference>
<dbReference type="FunFam" id="2.60.120.950:FF:000001">
    <property type="entry name" value="Capsid protein"/>
    <property type="match status" value="1"/>
</dbReference>
<dbReference type="Gene3D" id="2.60.120.950">
    <property type="entry name" value="Circovirus capsid protein"/>
    <property type="match status" value="1"/>
</dbReference>
<dbReference type="InterPro" id="IPR003383">
    <property type="entry name" value="Circovirus_capsid"/>
</dbReference>
<dbReference type="InterPro" id="IPR038652">
    <property type="entry name" value="Circovirus_capsid_sf"/>
</dbReference>
<dbReference type="Pfam" id="PF02443">
    <property type="entry name" value="Circo_capsid"/>
    <property type="match status" value="1"/>
</dbReference>
<gene>
    <name type="primary">Cap</name>
    <name type="ORF">ORF2</name>
</gene>